<feature type="chain" id="PRO_0000110441" description="Beta-ketoacyl-[acyl-carrier-protein] synthase III">
    <location>
        <begin position="1"/>
        <end position="312"/>
    </location>
</feature>
<feature type="region of interest" description="ACP-binding" evidence="1">
    <location>
        <begin position="238"/>
        <end position="242"/>
    </location>
</feature>
<feature type="active site" evidence="1">
    <location>
        <position position="112"/>
    </location>
</feature>
<feature type="active site" evidence="1">
    <location>
        <position position="237"/>
    </location>
</feature>
<feature type="active site" evidence="1">
    <location>
        <position position="267"/>
    </location>
</feature>
<accession>Q8Y573</accession>
<organism>
    <name type="scientific">Listeria monocytogenes serovar 1/2a (strain ATCC BAA-679 / EGD-e)</name>
    <dbReference type="NCBI Taxonomy" id="169963"/>
    <lineage>
        <taxon>Bacteria</taxon>
        <taxon>Bacillati</taxon>
        <taxon>Bacillota</taxon>
        <taxon>Bacilli</taxon>
        <taxon>Bacillales</taxon>
        <taxon>Listeriaceae</taxon>
        <taxon>Listeria</taxon>
    </lineage>
</organism>
<dbReference type="EC" id="2.3.1.180" evidence="1"/>
<dbReference type="EMBL" id="AL591982">
    <property type="protein sequence ID" value="CAD00280.1"/>
    <property type="molecule type" value="Genomic_DNA"/>
</dbReference>
<dbReference type="PIR" id="AB1350">
    <property type="entry name" value="AB1350"/>
</dbReference>
<dbReference type="RefSeq" id="NP_465726.1">
    <property type="nucleotide sequence ID" value="NC_003210.1"/>
</dbReference>
<dbReference type="RefSeq" id="WP_003722325.1">
    <property type="nucleotide sequence ID" value="NZ_CP149495.1"/>
</dbReference>
<dbReference type="SMR" id="Q8Y573"/>
<dbReference type="STRING" id="169963.gene:17594893"/>
<dbReference type="PaxDb" id="169963-lmo2202"/>
<dbReference type="EnsemblBacteria" id="CAD00280">
    <property type="protein sequence ID" value="CAD00280"/>
    <property type="gene ID" value="CAD00280"/>
</dbReference>
<dbReference type="GeneID" id="984640"/>
<dbReference type="KEGG" id="lmo:lmo2202"/>
<dbReference type="PATRIC" id="fig|169963.11.peg.2254"/>
<dbReference type="eggNOG" id="COG0332">
    <property type="taxonomic scope" value="Bacteria"/>
</dbReference>
<dbReference type="HOGENOM" id="CLU_039592_3_1_9"/>
<dbReference type="OrthoDB" id="9815506at2"/>
<dbReference type="PhylomeDB" id="Q8Y573"/>
<dbReference type="BioCyc" id="LMON169963:LMO2202-MONOMER"/>
<dbReference type="UniPathway" id="UPA00094"/>
<dbReference type="Proteomes" id="UP000000817">
    <property type="component" value="Chromosome"/>
</dbReference>
<dbReference type="GO" id="GO:0005737">
    <property type="term" value="C:cytoplasm"/>
    <property type="evidence" value="ECO:0007669"/>
    <property type="project" value="UniProtKB-SubCell"/>
</dbReference>
<dbReference type="GO" id="GO:0004315">
    <property type="term" value="F:3-oxoacyl-[acyl-carrier-protein] synthase activity"/>
    <property type="evidence" value="ECO:0007669"/>
    <property type="project" value="InterPro"/>
</dbReference>
<dbReference type="GO" id="GO:0033818">
    <property type="term" value="F:beta-ketoacyl-acyl-carrier-protein synthase III activity"/>
    <property type="evidence" value="ECO:0007669"/>
    <property type="project" value="UniProtKB-UniRule"/>
</dbReference>
<dbReference type="GO" id="GO:0006633">
    <property type="term" value="P:fatty acid biosynthetic process"/>
    <property type="evidence" value="ECO:0007669"/>
    <property type="project" value="UniProtKB-UniRule"/>
</dbReference>
<dbReference type="CDD" id="cd00830">
    <property type="entry name" value="KAS_III"/>
    <property type="match status" value="1"/>
</dbReference>
<dbReference type="FunFam" id="3.40.47.10:FF:000004">
    <property type="entry name" value="3-oxoacyl-[acyl-carrier-protein] synthase 3"/>
    <property type="match status" value="1"/>
</dbReference>
<dbReference type="Gene3D" id="3.40.47.10">
    <property type="match status" value="1"/>
</dbReference>
<dbReference type="HAMAP" id="MF_01815">
    <property type="entry name" value="FabH"/>
    <property type="match status" value="1"/>
</dbReference>
<dbReference type="InterPro" id="IPR013747">
    <property type="entry name" value="ACP_syn_III_C"/>
</dbReference>
<dbReference type="InterPro" id="IPR013751">
    <property type="entry name" value="ACP_syn_III_N"/>
</dbReference>
<dbReference type="InterPro" id="IPR004655">
    <property type="entry name" value="FabH"/>
</dbReference>
<dbReference type="InterPro" id="IPR016039">
    <property type="entry name" value="Thiolase-like"/>
</dbReference>
<dbReference type="NCBIfam" id="TIGR00747">
    <property type="entry name" value="fabH"/>
    <property type="match status" value="1"/>
</dbReference>
<dbReference type="NCBIfam" id="NF006829">
    <property type="entry name" value="PRK09352.1"/>
    <property type="match status" value="1"/>
</dbReference>
<dbReference type="PANTHER" id="PTHR43091">
    <property type="entry name" value="3-OXOACYL-[ACYL-CARRIER-PROTEIN] SYNTHASE"/>
    <property type="match status" value="1"/>
</dbReference>
<dbReference type="PANTHER" id="PTHR43091:SF1">
    <property type="entry name" value="BETA-KETOACYL-[ACYL-CARRIER-PROTEIN] SYNTHASE III, CHLOROPLASTIC"/>
    <property type="match status" value="1"/>
</dbReference>
<dbReference type="Pfam" id="PF08545">
    <property type="entry name" value="ACP_syn_III"/>
    <property type="match status" value="1"/>
</dbReference>
<dbReference type="Pfam" id="PF08541">
    <property type="entry name" value="ACP_syn_III_C"/>
    <property type="match status" value="1"/>
</dbReference>
<dbReference type="SUPFAM" id="SSF53901">
    <property type="entry name" value="Thiolase-like"/>
    <property type="match status" value="1"/>
</dbReference>
<sequence length="312" mass="33971">MNAGILGVGKYVPEKIVTNFDLEKIMDTSDEWIRTRTGIEERRIARDDEYTHDLAYEAAKVAIKNAGLTPDDIDLFIVATVTQEATFPSVANIIQDRLGAKNAAGMDVEAACAGFTFGVVTAAQFIKTGAYKNIVVVGADKLSKITNWDDRTTAVLFGDGAGAVVMGPVSDDHGLLSFDLGSDGSGGKYLNLDENKKIYMNGREVFRFAVRQMGEASLRVLERAGLEKEDLDLLIPHQANIRIMEASRERLNLPEEKLMKTVHKYGNTSSSSIALALVDAVEEGRIKDNDNVLLVGFGGGLTWGALIIRWGK</sequence>
<protein>
    <recommendedName>
        <fullName evidence="1">Beta-ketoacyl-[acyl-carrier-protein] synthase III</fullName>
        <shortName evidence="1">Beta-ketoacyl-ACP synthase III</shortName>
        <shortName evidence="1">KAS III</shortName>
        <ecNumber evidence="1">2.3.1.180</ecNumber>
    </recommendedName>
    <alternativeName>
        <fullName evidence="1">3-oxoacyl-[acyl-carrier-protein] synthase 3</fullName>
    </alternativeName>
    <alternativeName>
        <fullName evidence="1">3-oxoacyl-[acyl-carrier-protein] synthase III</fullName>
    </alternativeName>
</protein>
<keyword id="KW-0012">Acyltransferase</keyword>
<keyword id="KW-0963">Cytoplasm</keyword>
<keyword id="KW-0275">Fatty acid biosynthesis</keyword>
<keyword id="KW-0276">Fatty acid metabolism</keyword>
<keyword id="KW-0444">Lipid biosynthesis</keyword>
<keyword id="KW-0443">Lipid metabolism</keyword>
<keyword id="KW-0511">Multifunctional enzyme</keyword>
<keyword id="KW-1185">Reference proteome</keyword>
<keyword id="KW-0808">Transferase</keyword>
<name>FABH_LISMO</name>
<comment type="function">
    <text evidence="1">Catalyzes the condensation reaction of fatty acid synthesis by the addition to an acyl acceptor of two carbons from malonyl-ACP. Catalyzes the first condensation reaction which initiates fatty acid synthesis and may therefore play a role in governing the total rate of fatty acid production. Possesses both acetoacetyl-ACP synthase and acetyl transacylase activities. Its substrate specificity determines the biosynthesis of branched-chain and/or straight-chain of fatty acids.</text>
</comment>
<comment type="catalytic activity">
    <reaction evidence="1">
        <text>malonyl-[ACP] + acetyl-CoA + H(+) = 3-oxobutanoyl-[ACP] + CO2 + CoA</text>
        <dbReference type="Rhea" id="RHEA:12080"/>
        <dbReference type="Rhea" id="RHEA-COMP:9623"/>
        <dbReference type="Rhea" id="RHEA-COMP:9625"/>
        <dbReference type="ChEBI" id="CHEBI:15378"/>
        <dbReference type="ChEBI" id="CHEBI:16526"/>
        <dbReference type="ChEBI" id="CHEBI:57287"/>
        <dbReference type="ChEBI" id="CHEBI:57288"/>
        <dbReference type="ChEBI" id="CHEBI:78449"/>
        <dbReference type="ChEBI" id="CHEBI:78450"/>
        <dbReference type="EC" id="2.3.1.180"/>
    </reaction>
</comment>
<comment type="pathway">
    <text evidence="1">Lipid metabolism; fatty acid biosynthesis.</text>
</comment>
<comment type="subunit">
    <text evidence="1">Homodimer.</text>
</comment>
<comment type="subcellular location">
    <subcellularLocation>
        <location evidence="1">Cytoplasm</location>
    </subcellularLocation>
</comment>
<comment type="domain">
    <text evidence="1">The last Arg residue of the ACP-binding site is essential for the weak association between ACP/AcpP and FabH.</text>
</comment>
<comment type="similarity">
    <text evidence="1">Belongs to the thiolase-like superfamily. FabH family.</text>
</comment>
<evidence type="ECO:0000255" key="1">
    <source>
        <dbReference type="HAMAP-Rule" id="MF_01815"/>
    </source>
</evidence>
<proteinExistence type="inferred from homology"/>
<gene>
    <name evidence="1" type="primary">fabH</name>
    <name type="ordered locus">lmo2202</name>
</gene>
<reference key="1">
    <citation type="journal article" date="2001" name="Science">
        <title>Comparative genomics of Listeria species.</title>
        <authorList>
            <person name="Glaser P."/>
            <person name="Frangeul L."/>
            <person name="Buchrieser C."/>
            <person name="Rusniok C."/>
            <person name="Amend A."/>
            <person name="Baquero F."/>
            <person name="Berche P."/>
            <person name="Bloecker H."/>
            <person name="Brandt P."/>
            <person name="Chakraborty T."/>
            <person name="Charbit A."/>
            <person name="Chetouani F."/>
            <person name="Couve E."/>
            <person name="de Daruvar A."/>
            <person name="Dehoux P."/>
            <person name="Domann E."/>
            <person name="Dominguez-Bernal G."/>
            <person name="Duchaud E."/>
            <person name="Durant L."/>
            <person name="Dussurget O."/>
            <person name="Entian K.-D."/>
            <person name="Fsihi H."/>
            <person name="Garcia-del Portillo F."/>
            <person name="Garrido P."/>
            <person name="Gautier L."/>
            <person name="Goebel W."/>
            <person name="Gomez-Lopez N."/>
            <person name="Hain T."/>
            <person name="Hauf J."/>
            <person name="Jackson D."/>
            <person name="Jones L.-M."/>
            <person name="Kaerst U."/>
            <person name="Kreft J."/>
            <person name="Kuhn M."/>
            <person name="Kunst F."/>
            <person name="Kurapkat G."/>
            <person name="Madueno E."/>
            <person name="Maitournam A."/>
            <person name="Mata Vicente J."/>
            <person name="Ng E."/>
            <person name="Nedjari H."/>
            <person name="Nordsiek G."/>
            <person name="Novella S."/>
            <person name="de Pablos B."/>
            <person name="Perez-Diaz J.-C."/>
            <person name="Purcell R."/>
            <person name="Remmel B."/>
            <person name="Rose M."/>
            <person name="Schlueter T."/>
            <person name="Simoes N."/>
            <person name="Tierrez A."/>
            <person name="Vazquez-Boland J.-A."/>
            <person name="Voss H."/>
            <person name="Wehland J."/>
            <person name="Cossart P."/>
        </authorList>
    </citation>
    <scope>NUCLEOTIDE SEQUENCE [LARGE SCALE GENOMIC DNA]</scope>
    <source>
        <strain>ATCC BAA-679 / EGD-e</strain>
    </source>
</reference>